<name>KAX67_OPICA</name>
<proteinExistence type="evidence at transcript level"/>
<accession>Q6XLL8</accession>
<protein>
    <recommendedName>
        <fullName evidence="4">Potassium channel toxin alpha-KTx 6.7</fullName>
    </recommendedName>
    <alternativeName>
        <fullName evidence="4">OcKTx2</fullName>
    </alternativeName>
</protein>
<sequence length="61" mass="6756">MNAKFILLLLVVTTTMLLPDTQGAEVIKCRTPKDCADPCRKQTGCPHGKCMNRTCRCNRCG</sequence>
<reference key="1">
    <citation type="journal article" date="2004" name="Proteins">
        <title>Evolutionary trace analysis of scorpion toxins specific for K-channels.</title>
        <authorList>
            <person name="Zhu S.-Y."/>
            <person name="Huys I."/>
            <person name="Dyason K."/>
            <person name="Verdonck F."/>
            <person name="Tytgat J."/>
        </authorList>
    </citation>
    <scope>NUCLEOTIDE SEQUENCE [MRNA]</scope>
    <source>
        <tissue>Venom gland</tissue>
    </source>
</reference>
<evidence type="ECO:0000250" key="1"/>
<evidence type="ECO:0000250" key="2">
    <source>
        <dbReference type="UniProtKB" id="Q10726"/>
    </source>
</evidence>
<evidence type="ECO:0000255" key="3"/>
<evidence type="ECO:0000303" key="4">
    <source>
    </source>
</evidence>
<evidence type="ECO:0000305" key="5"/>
<keyword id="KW-0027">Amidation</keyword>
<keyword id="KW-1015">Disulfide bond</keyword>
<keyword id="KW-0872">Ion channel impairing toxin</keyword>
<keyword id="KW-0528">Neurotoxin</keyword>
<keyword id="KW-0632">Potassium channel impairing toxin</keyword>
<keyword id="KW-0964">Secreted</keyword>
<keyword id="KW-0732">Signal</keyword>
<keyword id="KW-0800">Toxin</keyword>
<organism>
    <name type="scientific">Opistophthalmus carinatus</name>
    <name type="common">African yellow leg scorpion</name>
    <dbReference type="NCBI Taxonomy" id="190115"/>
    <lineage>
        <taxon>Eukaryota</taxon>
        <taxon>Metazoa</taxon>
        <taxon>Ecdysozoa</taxon>
        <taxon>Arthropoda</taxon>
        <taxon>Chelicerata</taxon>
        <taxon>Arachnida</taxon>
        <taxon>Scorpiones</taxon>
        <taxon>Iurida</taxon>
        <taxon>Scorpionoidea</taxon>
        <taxon>Scorpionidae</taxon>
        <taxon>Opistophthalminae</taxon>
        <taxon>Opistophthalmus</taxon>
    </lineage>
</organism>
<feature type="signal peptide" evidence="3">
    <location>
        <begin position="1"/>
        <end position="23"/>
    </location>
</feature>
<feature type="chain" id="PRO_0000227032" description="Potassium channel toxin alpha-KTx 6.7">
    <location>
        <begin position="24"/>
        <end position="60"/>
    </location>
</feature>
<feature type="modified residue" description="Cysteine amide" evidence="2">
    <location>
        <position position="60"/>
    </location>
</feature>
<feature type="disulfide bond" evidence="2">
    <location>
        <begin position="29"/>
        <end position="50"/>
    </location>
</feature>
<feature type="disulfide bond" evidence="2">
    <location>
        <begin position="35"/>
        <end position="55"/>
    </location>
</feature>
<feature type="disulfide bond" evidence="2">
    <location>
        <begin position="39"/>
        <end position="57"/>
    </location>
</feature>
<feature type="disulfide bond" evidence="2">
    <location>
        <begin position="45"/>
        <end position="60"/>
    </location>
</feature>
<dbReference type="EMBL" id="AY225780">
    <property type="protein sequence ID" value="AAP73818.1"/>
    <property type="molecule type" value="mRNA"/>
</dbReference>
<dbReference type="SMR" id="Q6XLL8"/>
<dbReference type="GO" id="GO:0005576">
    <property type="term" value="C:extracellular region"/>
    <property type="evidence" value="ECO:0007669"/>
    <property type="project" value="UniProtKB-SubCell"/>
</dbReference>
<dbReference type="GO" id="GO:0008200">
    <property type="term" value="F:ion channel inhibitor activity"/>
    <property type="evidence" value="ECO:0007669"/>
    <property type="project" value="InterPro"/>
</dbReference>
<dbReference type="GO" id="GO:0015459">
    <property type="term" value="F:potassium channel regulator activity"/>
    <property type="evidence" value="ECO:0007669"/>
    <property type="project" value="UniProtKB-KW"/>
</dbReference>
<dbReference type="GO" id="GO:0090729">
    <property type="term" value="F:toxin activity"/>
    <property type="evidence" value="ECO:0007669"/>
    <property type="project" value="UniProtKB-KW"/>
</dbReference>
<dbReference type="Gene3D" id="3.30.30.10">
    <property type="entry name" value="Knottin, scorpion toxin-like"/>
    <property type="match status" value="1"/>
</dbReference>
<dbReference type="InterPro" id="IPR036574">
    <property type="entry name" value="Scorpion_toxin-like_sf"/>
</dbReference>
<dbReference type="InterPro" id="IPR001947">
    <property type="entry name" value="Scorpion_toxinS_K_inh"/>
</dbReference>
<dbReference type="Pfam" id="PF00451">
    <property type="entry name" value="Toxin_2"/>
    <property type="match status" value="1"/>
</dbReference>
<dbReference type="SUPFAM" id="SSF57095">
    <property type="entry name" value="Scorpion toxin-like"/>
    <property type="match status" value="1"/>
</dbReference>
<dbReference type="PROSITE" id="PS01138">
    <property type="entry name" value="SCORP_SHORT_TOXIN"/>
    <property type="match status" value="1"/>
</dbReference>
<comment type="function">
    <text evidence="1">Blocker of voltage-gated potassium channels.</text>
</comment>
<comment type="subcellular location">
    <subcellularLocation>
        <location evidence="1">Secreted</location>
    </subcellularLocation>
</comment>
<comment type="tissue specificity">
    <text>Expressed by the venom gland.</text>
</comment>
<comment type="domain">
    <text evidence="5">Has the structural arrangement of an alpha-helix connected to antiparallel beta-sheets by disulfide bonds (CS-alpha/beta).</text>
</comment>
<comment type="similarity">
    <text evidence="5">Belongs to the short scorpion toxin superfamily. Potassium channel inhibitor family. Alpha-KTx 06 subfamily.</text>
</comment>